<name>SSRP_BORA1</name>
<reference key="1">
    <citation type="journal article" date="2006" name="J. Bacteriol.">
        <title>Comparison of the genome sequence of the poultry pathogen Bordetella avium with those of B. bronchiseptica, B. pertussis, and B. parapertussis reveals extensive diversity in surface structures associated with host interaction.</title>
        <authorList>
            <person name="Sebaihia M."/>
            <person name="Preston A."/>
            <person name="Maskell D.J."/>
            <person name="Kuzmiak H."/>
            <person name="Connell T.D."/>
            <person name="King N.D."/>
            <person name="Orndorff P.E."/>
            <person name="Miyamoto D.M."/>
            <person name="Thomson N.R."/>
            <person name="Harris D."/>
            <person name="Goble A."/>
            <person name="Lord A."/>
            <person name="Murphy L."/>
            <person name="Quail M.A."/>
            <person name="Rutter S."/>
            <person name="Squares R."/>
            <person name="Squares S."/>
            <person name="Woodward J."/>
            <person name="Parkhill J."/>
            <person name="Temple L.M."/>
        </authorList>
    </citation>
    <scope>NUCLEOTIDE SEQUENCE [LARGE SCALE GENOMIC DNA]</scope>
    <source>
        <strain>197N</strain>
    </source>
</reference>
<keyword id="KW-0963">Cytoplasm</keyword>
<keyword id="KW-1185">Reference proteome</keyword>
<keyword id="KW-0694">RNA-binding</keyword>
<gene>
    <name evidence="1" type="primary">smpB</name>
    <name type="ordered locus">BAV1755</name>
</gene>
<comment type="function">
    <text evidence="1">Required for rescue of stalled ribosomes mediated by trans-translation. Binds to transfer-messenger RNA (tmRNA), required for stable association of tmRNA with ribosomes. tmRNA and SmpB together mimic tRNA shape, replacing the anticodon stem-loop with SmpB. tmRNA is encoded by the ssrA gene; the 2 termini fold to resemble tRNA(Ala) and it encodes a 'tag peptide', a short internal open reading frame. During trans-translation Ala-aminoacylated tmRNA acts like a tRNA, entering the A-site of stalled ribosomes, displacing the stalled mRNA. The ribosome then switches to translate the ORF on the tmRNA; the nascent peptide is terminated with the 'tag peptide' encoded by the tmRNA and targeted for degradation. The ribosome is freed to recommence translation, which seems to be the essential function of trans-translation.</text>
</comment>
<comment type="subcellular location">
    <subcellularLocation>
        <location evidence="1">Cytoplasm</location>
    </subcellularLocation>
    <text evidence="1">The tmRNA-SmpB complex associates with stalled 70S ribosomes.</text>
</comment>
<comment type="similarity">
    <text evidence="1">Belongs to the SmpB family.</text>
</comment>
<evidence type="ECO:0000255" key="1">
    <source>
        <dbReference type="HAMAP-Rule" id="MF_00023"/>
    </source>
</evidence>
<evidence type="ECO:0000256" key="2">
    <source>
        <dbReference type="SAM" id="MobiDB-lite"/>
    </source>
</evidence>
<feature type="chain" id="PRO_1000002003" description="SsrA-binding protein">
    <location>
        <begin position="1"/>
        <end position="153"/>
    </location>
</feature>
<feature type="region of interest" description="Disordered" evidence="2">
    <location>
        <begin position="132"/>
        <end position="153"/>
    </location>
</feature>
<proteinExistence type="inferred from homology"/>
<sequence>MSIIDNRKASHDYFIEDRYEAGLVLQGWEVKSIRAGRVQLKESYVIVRDGELFLLGMHVSPLPTASTHIHPDAMRTRKLLLKAEEIHKLIGKVEQRGFTLVPLNLHYKNGRVKLDFALGRGKKLYDKRDTSREKDWLRERERVMKHDTRRRSD</sequence>
<organism>
    <name type="scientific">Bordetella avium (strain 197N)</name>
    <dbReference type="NCBI Taxonomy" id="360910"/>
    <lineage>
        <taxon>Bacteria</taxon>
        <taxon>Pseudomonadati</taxon>
        <taxon>Pseudomonadota</taxon>
        <taxon>Betaproteobacteria</taxon>
        <taxon>Burkholderiales</taxon>
        <taxon>Alcaligenaceae</taxon>
        <taxon>Bordetella</taxon>
    </lineage>
</organism>
<protein>
    <recommendedName>
        <fullName evidence="1">SsrA-binding protein</fullName>
    </recommendedName>
    <alternativeName>
        <fullName evidence="1">Small protein B</fullName>
    </alternativeName>
</protein>
<accession>Q2L136</accession>
<dbReference type="EMBL" id="AM167904">
    <property type="protein sequence ID" value="CAJ49364.1"/>
    <property type="molecule type" value="Genomic_DNA"/>
</dbReference>
<dbReference type="RefSeq" id="WP_012417425.1">
    <property type="nucleotide sequence ID" value="NC_010645.1"/>
</dbReference>
<dbReference type="SMR" id="Q2L136"/>
<dbReference type="STRING" id="360910.BAV1755"/>
<dbReference type="GeneID" id="92935183"/>
<dbReference type="KEGG" id="bav:BAV1755"/>
<dbReference type="eggNOG" id="COG0691">
    <property type="taxonomic scope" value="Bacteria"/>
</dbReference>
<dbReference type="HOGENOM" id="CLU_108953_3_0_4"/>
<dbReference type="OrthoDB" id="9805462at2"/>
<dbReference type="Proteomes" id="UP000001977">
    <property type="component" value="Chromosome"/>
</dbReference>
<dbReference type="GO" id="GO:0005829">
    <property type="term" value="C:cytosol"/>
    <property type="evidence" value="ECO:0007669"/>
    <property type="project" value="TreeGrafter"/>
</dbReference>
<dbReference type="GO" id="GO:0003723">
    <property type="term" value="F:RNA binding"/>
    <property type="evidence" value="ECO:0007669"/>
    <property type="project" value="UniProtKB-UniRule"/>
</dbReference>
<dbReference type="GO" id="GO:0070929">
    <property type="term" value="P:trans-translation"/>
    <property type="evidence" value="ECO:0007669"/>
    <property type="project" value="UniProtKB-UniRule"/>
</dbReference>
<dbReference type="CDD" id="cd09294">
    <property type="entry name" value="SmpB"/>
    <property type="match status" value="1"/>
</dbReference>
<dbReference type="Gene3D" id="2.40.280.10">
    <property type="match status" value="1"/>
</dbReference>
<dbReference type="HAMAP" id="MF_00023">
    <property type="entry name" value="SmpB"/>
    <property type="match status" value="1"/>
</dbReference>
<dbReference type="InterPro" id="IPR023620">
    <property type="entry name" value="SmpB"/>
</dbReference>
<dbReference type="InterPro" id="IPR000037">
    <property type="entry name" value="SsrA-bd_prot"/>
</dbReference>
<dbReference type="InterPro" id="IPR020081">
    <property type="entry name" value="SsrA-bd_prot_CS"/>
</dbReference>
<dbReference type="NCBIfam" id="NF003843">
    <property type="entry name" value="PRK05422.1"/>
    <property type="match status" value="1"/>
</dbReference>
<dbReference type="NCBIfam" id="TIGR00086">
    <property type="entry name" value="smpB"/>
    <property type="match status" value="1"/>
</dbReference>
<dbReference type="PANTHER" id="PTHR30308:SF2">
    <property type="entry name" value="SSRA-BINDING PROTEIN"/>
    <property type="match status" value="1"/>
</dbReference>
<dbReference type="PANTHER" id="PTHR30308">
    <property type="entry name" value="TMRNA-BINDING COMPONENT OF TRANS-TRANSLATION TAGGING COMPLEX"/>
    <property type="match status" value="1"/>
</dbReference>
<dbReference type="Pfam" id="PF01668">
    <property type="entry name" value="SmpB"/>
    <property type="match status" value="1"/>
</dbReference>
<dbReference type="SUPFAM" id="SSF74982">
    <property type="entry name" value="Small protein B (SmpB)"/>
    <property type="match status" value="1"/>
</dbReference>
<dbReference type="PROSITE" id="PS01317">
    <property type="entry name" value="SSRP"/>
    <property type="match status" value="1"/>
</dbReference>